<keyword id="KW-1003">Cell membrane</keyword>
<keyword id="KW-0285">Flavoprotein</keyword>
<keyword id="KW-0288">FMN</keyword>
<keyword id="KW-0472">Membrane</keyword>
<keyword id="KW-0560">Oxidoreductase</keyword>
<keyword id="KW-0665">Pyrimidine biosynthesis</keyword>
<keyword id="KW-1185">Reference proteome</keyword>
<feature type="chain" id="PRO_0000148421" description="Dihydroorotate dehydrogenase (quinone)">
    <location>
        <begin position="1"/>
        <end position="376"/>
    </location>
</feature>
<feature type="active site" description="Nucleophile" evidence="1">
    <location>
        <position position="193"/>
    </location>
</feature>
<feature type="binding site" evidence="1">
    <location>
        <begin position="78"/>
        <end position="82"/>
    </location>
    <ligand>
        <name>FMN</name>
        <dbReference type="ChEBI" id="CHEBI:58210"/>
    </ligand>
</feature>
<feature type="binding site" evidence="1">
    <location>
        <position position="82"/>
    </location>
    <ligand>
        <name>substrate</name>
    </ligand>
</feature>
<feature type="binding site" evidence="1">
    <location>
        <position position="102"/>
    </location>
    <ligand>
        <name>FMN</name>
        <dbReference type="ChEBI" id="CHEBI:58210"/>
    </ligand>
</feature>
<feature type="binding site" evidence="1">
    <location>
        <begin position="127"/>
        <end position="131"/>
    </location>
    <ligand>
        <name>substrate</name>
    </ligand>
</feature>
<feature type="binding site" evidence="1">
    <location>
        <position position="157"/>
    </location>
    <ligand>
        <name>FMN</name>
        <dbReference type="ChEBI" id="CHEBI:58210"/>
    </ligand>
</feature>
<feature type="binding site" evidence="1">
    <location>
        <position position="190"/>
    </location>
    <ligand>
        <name>FMN</name>
        <dbReference type="ChEBI" id="CHEBI:58210"/>
    </ligand>
</feature>
<feature type="binding site" evidence="1">
    <location>
        <position position="190"/>
    </location>
    <ligand>
        <name>substrate</name>
    </ligand>
</feature>
<feature type="binding site" evidence="1">
    <location>
        <position position="195"/>
    </location>
    <ligand>
        <name>substrate</name>
    </ligand>
</feature>
<feature type="binding site" evidence="1">
    <location>
        <position position="228"/>
    </location>
    <ligand>
        <name>FMN</name>
        <dbReference type="ChEBI" id="CHEBI:58210"/>
    </ligand>
</feature>
<feature type="binding site" evidence="1">
    <location>
        <position position="256"/>
    </location>
    <ligand>
        <name>FMN</name>
        <dbReference type="ChEBI" id="CHEBI:58210"/>
    </ligand>
</feature>
<feature type="binding site" evidence="1">
    <location>
        <begin position="257"/>
        <end position="258"/>
    </location>
    <ligand>
        <name>substrate</name>
    </ligand>
</feature>
<feature type="binding site" evidence="1">
    <location>
        <position position="286"/>
    </location>
    <ligand>
        <name>FMN</name>
        <dbReference type="ChEBI" id="CHEBI:58210"/>
    </ligand>
</feature>
<feature type="binding site" evidence="1">
    <location>
        <position position="315"/>
    </location>
    <ligand>
        <name>FMN</name>
        <dbReference type="ChEBI" id="CHEBI:58210"/>
    </ligand>
</feature>
<feature type="binding site" evidence="1">
    <location>
        <begin position="336"/>
        <end position="337"/>
    </location>
    <ligand>
        <name>FMN</name>
        <dbReference type="ChEBI" id="CHEBI:58210"/>
    </ligand>
</feature>
<evidence type="ECO:0000255" key="1">
    <source>
        <dbReference type="HAMAP-Rule" id="MF_00225"/>
    </source>
</evidence>
<dbReference type="EC" id="1.3.5.2" evidence="1"/>
<dbReference type="EMBL" id="BA000019">
    <property type="protein sequence ID" value="BAB75971.1"/>
    <property type="molecule type" value="Genomic_DNA"/>
</dbReference>
<dbReference type="PIR" id="AI2339">
    <property type="entry name" value="AI2339"/>
</dbReference>
<dbReference type="RefSeq" id="WP_010998410.1">
    <property type="nucleotide sequence ID" value="NZ_RSCN01000010.1"/>
</dbReference>
<dbReference type="SMR" id="Q8YPC6"/>
<dbReference type="STRING" id="103690.gene:10496321"/>
<dbReference type="KEGG" id="ana:all4272"/>
<dbReference type="eggNOG" id="COG0167">
    <property type="taxonomic scope" value="Bacteria"/>
</dbReference>
<dbReference type="OrthoDB" id="9802377at2"/>
<dbReference type="UniPathway" id="UPA00070">
    <property type="reaction ID" value="UER00946"/>
</dbReference>
<dbReference type="Proteomes" id="UP000002483">
    <property type="component" value="Chromosome"/>
</dbReference>
<dbReference type="GO" id="GO:0005737">
    <property type="term" value="C:cytoplasm"/>
    <property type="evidence" value="ECO:0007669"/>
    <property type="project" value="InterPro"/>
</dbReference>
<dbReference type="GO" id="GO:0005886">
    <property type="term" value="C:plasma membrane"/>
    <property type="evidence" value="ECO:0007669"/>
    <property type="project" value="UniProtKB-SubCell"/>
</dbReference>
<dbReference type="GO" id="GO:0106430">
    <property type="term" value="F:dihydroorotate dehydrogenase (quinone) activity"/>
    <property type="evidence" value="ECO:0007669"/>
    <property type="project" value="UniProtKB-EC"/>
</dbReference>
<dbReference type="GO" id="GO:0006207">
    <property type="term" value="P:'de novo' pyrimidine nucleobase biosynthetic process"/>
    <property type="evidence" value="ECO:0007669"/>
    <property type="project" value="InterPro"/>
</dbReference>
<dbReference type="GO" id="GO:0044205">
    <property type="term" value="P:'de novo' UMP biosynthetic process"/>
    <property type="evidence" value="ECO:0007669"/>
    <property type="project" value="UniProtKB-UniRule"/>
</dbReference>
<dbReference type="CDD" id="cd04738">
    <property type="entry name" value="DHOD_2_like"/>
    <property type="match status" value="1"/>
</dbReference>
<dbReference type="Gene3D" id="3.20.20.70">
    <property type="entry name" value="Aldolase class I"/>
    <property type="match status" value="1"/>
</dbReference>
<dbReference type="HAMAP" id="MF_00225">
    <property type="entry name" value="DHO_dh_type2"/>
    <property type="match status" value="1"/>
</dbReference>
<dbReference type="InterPro" id="IPR013785">
    <property type="entry name" value="Aldolase_TIM"/>
</dbReference>
<dbReference type="InterPro" id="IPR050074">
    <property type="entry name" value="DHO_dehydrogenase"/>
</dbReference>
<dbReference type="InterPro" id="IPR005719">
    <property type="entry name" value="Dihydroorotate_DH_2"/>
</dbReference>
<dbReference type="InterPro" id="IPR005720">
    <property type="entry name" value="Dihydroorotate_DH_cat"/>
</dbReference>
<dbReference type="InterPro" id="IPR001295">
    <property type="entry name" value="Dihydroorotate_DH_CS"/>
</dbReference>
<dbReference type="NCBIfam" id="NF003651">
    <property type="entry name" value="PRK05286.2-4"/>
    <property type="match status" value="1"/>
</dbReference>
<dbReference type="NCBIfam" id="NF003652">
    <property type="entry name" value="PRK05286.2-5"/>
    <property type="match status" value="1"/>
</dbReference>
<dbReference type="NCBIfam" id="TIGR01036">
    <property type="entry name" value="pyrD_sub2"/>
    <property type="match status" value="1"/>
</dbReference>
<dbReference type="PANTHER" id="PTHR48109:SF4">
    <property type="entry name" value="DIHYDROOROTATE DEHYDROGENASE (QUINONE), MITOCHONDRIAL"/>
    <property type="match status" value="1"/>
</dbReference>
<dbReference type="PANTHER" id="PTHR48109">
    <property type="entry name" value="DIHYDROOROTATE DEHYDROGENASE (QUINONE), MITOCHONDRIAL-RELATED"/>
    <property type="match status" value="1"/>
</dbReference>
<dbReference type="Pfam" id="PF01180">
    <property type="entry name" value="DHO_dh"/>
    <property type="match status" value="1"/>
</dbReference>
<dbReference type="SUPFAM" id="SSF51395">
    <property type="entry name" value="FMN-linked oxidoreductases"/>
    <property type="match status" value="1"/>
</dbReference>
<dbReference type="PROSITE" id="PS00911">
    <property type="entry name" value="DHODEHASE_1"/>
    <property type="match status" value="1"/>
</dbReference>
<dbReference type="PROSITE" id="PS00912">
    <property type="entry name" value="DHODEHASE_2"/>
    <property type="match status" value="1"/>
</dbReference>
<organism>
    <name type="scientific">Nostoc sp. (strain PCC 7120 / SAG 25.82 / UTEX 2576)</name>
    <dbReference type="NCBI Taxonomy" id="103690"/>
    <lineage>
        <taxon>Bacteria</taxon>
        <taxon>Bacillati</taxon>
        <taxon>Cyanobacteriota</taxon>
        <taxon>Cyanophyceae</taxon>
        <taxon>Nostocales</taxon>
        <taxon>Nostocaceae</taxon>
        <taxon>Nostoc</taxon>
    </lineage>
</organism>
<protein>
    <recommendedName>
        <fullName evidence="1">Dihydroorotate dehydrogenase (quinone)</fullName>
        <ecNumber evidence="1">1.3.5.2</ecNumber>
    </recommendedName>
    <alternativeName>
        <fullName evidence="1">DHOdehase</fullName>
        <shortName evidence="1">DHOD</shortName>
        <shortName evidence="1">DHODase</shortName>
    </alternativeName>
    <alternativeName>
        <fullName evidence="1">Dihydroorotate oxidase</fullName>
    </alternativeName>
</protein>
<proteinExistence type="inferred from homology"/>
<comment type="function">
    <text evidence="1">Catalyzes the conversion of dihydroorotate to orotate with quinone as electron acceptor.</text>
</comment>
<comment type="catalytic activity">
    <reaction evidence="1">
        <text>(S)-dihydroorotate + a quinone = orotate + a quinol</text>
        <dbReference type="Rhea" id="RHEA:30187"/>
        <dbReference type="ChEBI" id="CHEBI:24646"/>
        <dbReference type="ChEBI" id="CHEBI:30839"/>
        <dbReference type="ChEBI" id="CHEBI:30864"/>
        <dbReference type="ChEBI" id="CHEBI:132124"/>
        <dbReference type="EC" id="1.3.5.2"/>
    </reaction>
</comment>
<comment type="cofactor">
    <cofactor evidence="1">
        <name>FMN</name>
        <dbReference type="ChEBI" id="CHEBI:58210"/>
    </cofactor>
    <text evidence="1">Binds 1 FMN per subunit.</text>
</comment>
<comment type="pathway">
    <text evidence="1">Pyrimidine metabolism; UMP biosynthesis via de novo pathway; orotate from (S)-dihydroorotate (quinone route): step 1/1.</text>
</comment>
<comment type="subunit">
    <text evidence="1">Monomer.</text>
</comment>
<comment type="subcellular location">
    <subcellularLocation>
        <location evidence="1">Cell membrane</location>
        <topology evidence="1">Peripheral membrane protein</topology>
    </subcellularLocation>
</comment>
<comment type="similarity">
    <text evidence="1">Belongs to the dihydroorotate dehydrogenase family. Type 2 subfamily.</text>
</comment>
<reference key="1">
    <citation type="journal article" date="2001" name="DNA Res.">
        <title>Complete genomic sequence of the filamentous nitrogen-fixing cyanobacterium Anabaena sp. strain PCC 7120.</title>
        <authorList>
            <person name="Kaneko T."/>
            <person name="Nakamura Y."/>
            <person name="Wolk C.P."/>
            <person name="Kuritz T."/>
            <person name="Sasamoto S."/>
            <person name="Watanabe A."/>
            <person name="Iriguchi M."/>
            <person name="Ishikawa A."/>
            <person name="Kawashima K."/>
            <person name="Kimura T."/>
            <person name="Kishida Y."/>
            <person name="Kohara M."/>
            <person name="Matsumoto M."/>
            <person name="Matsuno A."/>
            <person name="Muraki A."/>
            <person name="Nakazaki N."/>
            <person name="Shimpo S."/>
            <person name="Sugimoto M."/>
            <person name="Takazawa M."/>
            <person name="Yamada M."/>
            <person name="Yasuda M."/>
            <person name="Tabata S."/>
        </authorList>
    </citation>
    <scope>NUCLEOTIDE SEQUENCE [LARGE SCALE GENOMIC DNA]</scope>
    <source>
        <strain>PCC 7120 / SAG 25.82 / UTEX 2576</strain>
    </source>
</reference>
<accession>Q8YPC6</accession>
<name>PYRD_NOSS1</name>
<sequence length="376" mass="41291">MDIYKFAVRPLLFDLVKADPEWLHQQTMRSLSWLSHTSDRTSTKWVQNILQKSLCLEDSRLEQNLFGLRFPNPVGLAAGFDKDGVAARIWSSLGFGFAELGTVTFVGQPGNPPPRLFRLPLDQAALNRMGFNNHGAAVMAARLADEKGQFSIPIGINLGKSKVTPLEAAAEDYLNSFRLLKELGDYFVVNVSSPNTPGLRSLQDASMLSSILDVLQKENNSHKPIFVKIAPDLEWEAIADIIGLAKTYQLAGIIATNTTIRRDGLKTQVIEQTGKAPQEEAGGISGAPVRDRSTEIIRFIWQQTQGEIPIIGVGGIFTPEDAWAKITAGASLIQVYTGWIYQGPMMVSQILTGLLSKLEEHELNSISEAIGLEFKS</sequence>
<gene>
    <name evidence="1" type="primary">pyrD</name>
    <name type="ordered locus">all4272</name>
</gene>